<organism>
    <name type="scientific">Rattus norvegicus</name>
    <name type="common">Rat</name>
    <dbReference type="NCBI Taxonomy" id="10116"/>
    <lineage>
        <taxon>Eukaryota</taxon>
        <taxon>Metazoa</taxon>
        <taxon>Chordata</taxon>
        <taxon>Craniata</taxon>
        <taxon>Vertebrata</taxon>
        <taxon>Euteleostomi</taxon>
        <taxon>Mammalia</taxon>
        <taxon>Eutheria</taxon>
        <taxon>Euarchontoglires</taxon>
        <taxon>Glires</taxon>
        <taxon>Rodentia</taxon>
        <taxon>Myomorpha</taxon>
        <taxon>Muroidea</taxon>
        <taxon>Muridae</taxon>
        <taxon>Murinae</taxon>
        <taxon>Rattus</taxon>
    </lineage>
</organism>
<comment type="function">
    <text evidence="2 3 8">Core component of the 3M and Cul7-RING(FBXW8) complexes, which mediate the ubiquitination and subsequent proteasomal degradation of target proteins (By similarity). Core component of the 3M complex, a complex required to regulate microtubule dynamics and genome integrity (By similarity). It is unclear how the 3M complex regulates microtubules, it could act by controlling the level of a microtubule stabilizer (By similarity). The Cul7-RING(FBXW8) complex alone lacks ubiquitination activity and does not promote polyubiquitination and proteasomal degradation of p53/TP53 (By similarity). However it mediates recruitment of p53/TP53 for ubiquitination by neddylated CUL1-RBX1 (By similarity). Interaction with CUL9 is required to inhibit CUL9 activity and ubiquitination of BIRC5 (By similarity). The Cul7-RING(FBXW8) complex also mediates ubiquitination and consequent degradation of target proteins such as GORASP1, IRS1 and MAP4K1/HPK1 (By similarity). Ubiquitination of GORASP1 regulates Golgi morphogenesis and dendrite patterning in brain (PubMed:21572988). Mediates ubiquitination and degradation of IRS1 in a mTOR-dependent manner: the Cul7-RING(FBXW8) complex recognizes and binds IRS1 previously phosphorylated by S6 kinase (RPS6KB1 or RPS6KB2) (By similarity). The Cul7-RING(FBXW8) complex also mediates ubiquitination of MAP4K1/HPK1: recognizes and binds autophosphorylated MAP4K1/HPK1, leading to its degradation, thereby affecting cell proliferation and differentiation (By similarity). Acts as a regulator in trophoblast cell epithelial-mesenchymal transition and placental development (By similarity). While the Cul7-RING(FBXW8) and the 3M complexes are associated and involved in common processes, CUL7 and the Cul7-RING(FBXW8) complex may have additional functions (By similarity). Probably plays a role in the degradation of proteins involved in endothelial proliferation and/or differentiation (By similarity).</text>
</comment>
<comment type="pathway">
    <text evidence="8">Protein modification; protein ubiquitination.</text>
</comment>
<comment type="subunit">
    <text evidence="2 8">Component of the 3M complex, composed of core components CUL7, CCDC8 and OBSL1 (PubMed:21572988). Component of the Cul7-RING(FBXW8) complex consisting of CUL7, RBX1, SKP1 and FBXW8 (PubMed:21572988). Within the Cul7-RING(FBXW8) complex interacts with FBXW8 and RBX1, but not with SKP1 (By similarity). Interacts with CUL1 (via the C-terminal domain); the interaction seems to be mediated by FBXW8; it is likely specific to FBXW8, but not other F-box proteins (By similarity). Interacts (via the CPH domain) with p53/TP53; the interaction preferentially involves tetrameric and dimeric p53/TP53; this interaction recruits p53/TP53 for ubiquitination by neddylated CUL1-RBX1 (By similarity). The CUL7-CUL9 heterodimer seems to interact specifically with p53/TP53 (By similarity). Interacts with FBXW8; interaction is mutually exclusive of binding to CUL9 or p53/TP53 (By similarity). Interacts with CUL9; leading to inhibited CUL9 activity (By similarity). Interacts with OBSL1 (By similarity). Interacts (as part of the 3M complex) with HDAC4 and HDAC5; it is negatively regulated by ANKRA2 (By similarity).</text>
</comment>
<comment type="subcellular location">
    <subcellularLocation>
        <location evidence="8">Cytoplasm</location>
    </subcellularLocation>
    <subcellularLocation>
        <location evidence="1">Cytoplasm</location>
        <location evidence="1">Cytoskeleton</location>
        <location evidence="1">Microtubule organizing center</location>
        <location evidence="1">Centrosome</location>
    </subcellularLocation>
    <subcellularLocation>
        <location evidence="8">Cytoplasm</location>
        <location evidence="8">Perinuclear region</location>
    </subcellularLocation>
    <subcellularLocation>
        <location evidence="8">Golgi apparatus</location>
    </subcellularLocation>
    <text evidence="1">During mitosis, localizes to the mitotic apparatus. CCDC8 is required for centrosomal location (By similarity). Colocalizes with FBXW8 at the Golgi apparatus in neurons; localization to Golgi is mediated by OBSL1.</text>
</comment>
<comment type="domain">
    <text evidence="2">The CPH domain is essential for interaction with p53/TP53.</text>
</comment>
<comment type="similarity">
    <text evidence="5">Belongs to the cullin family.</text>
</comment>
<reference evidence="9" key="1">
    <citation type="journal article" date="2004" name="Nature">
        <title>Genome sequence of the Brown Norway rat yields insights into mammalian evolution.</title>
        <authorList>
            <person name="Gibbs R.A."/>
            <person name="Weinstock G.M."/>
            <person name="Metzker M.L."/>
            <person name="Muzny D.M."/>
            <person name="Sodergren E.J."/>
            <person name="Scherer S."/>
            <person name="Scott G."/>
            <person name="Steffen D."/>
            <person name="Worley K.C."/>
            <person name="Burch P.E."/>
            <person name="Okwuonu G."/>
            <person name="Hines S."/>
            <person name="Lewis L."/>
            <person name="Deramo C."/>
            <person name="Delgado O."/>
            <person name="Dugan-Rocha S."/>
            <person name="Miner G."/>
            <person name="Morgan M."/>
            <person name="Hawes A."/>
            <person name="Gill R."/>
            <person name="Holt R.A."/>
            <person name="Adams M.D."/>
            <person name="Amanatides P.G."/>
            <person name="Baden-Tillson H."/>
            <person name="Barnstead M."/>
            <person name="Chin S."/>
            <person name="Evans C.A."/>
            <person name="Ferriera S."/>
            <person name="Fosler C."/>
            <person name="Glodek A."/>
            <person name="Gu Z."/>
            <person name="Jennings D."/>
            <person name="Kraft C.L."/>
            <person name="Nguyen T."/>
            <person name="Pfannkoch C.M."/>
            <person name="Sitter C."/>
            <person name="Sutton G.G."/>
            <person name="Venter J.C."/>
            <person name="Woodage T."/>
            <person name="Smith D."/>
            <person name="Lee H.-M."/>
            <person name="Gustafson E."/>
            <person name="Cahill P."/>
            <person name="Kana A."/>
            <person name="Doucette-Stamm L."/>
            <person name="Weinstock K."/>
            <person name="Fechtel K."/>
            <person name="Weiss R.B."/>
            <person name="Dunn D.M."/>
            <person name="Green E.D."/>
            <person name="Blakesley R.W."/>
            <person name="Bouffard G.G."/>
            <person name="De Jong P.J."/>
            <person name="Osoegawa K."/>
            <person name="Zhu B."/>
            <person name="Marra M."/>
            <person name="Schein J."/>
            <person name="Bosdet I."/>
            <person name="Fjell C."/>
            <person name="Jones S."/>
            <person name="Krzywinski M."/>
            <person name="Mathewson C."/>
            <person name="Siddiqui A."/>
            <person name="Wye N."/>
            <person name="McPherson J."/>
            <person name="Zhao S."/>
            <person name="Fraser C.M."/>
            <person name="Shetty J."/>
            <person name="Shatsman S."/>
            <person name="Geer K."/>
            <person name="Chen Y."/>
            <person name="Abramzon S."/>
            <person name="Nierman W.C."/>
            <person name="Havlak P.H."/>
            <person name="Chen R."/>
            <person name="Durbin K.J."/>
            <person name="Egan A."/>
            <person name="Ren Y."/>
            <person name="Song X.-Z."/>
            <person name="Li B."/>
            <person name="Liu Y."/>
            <person name="Qin X."/>
            <person name="Cawley S."/>
            <person name="Cooney A.J."/>
            <person name="D'Souza L.M."/>
            <person name="Martin K."/>
            <person name="Wu J.Q."/>
            <person name="Gonzalez-Garay M.L."/>
            <person name="Jackson A.R."/>
            <person name="Kalafus K.J."/>
            <person name="McLeod M.P."/>
            <person name="Milosavljevic A."/>
            <person name="Virk D."/>
            <person name="Volkov A."/>
            <person name="Wheeler D.A."/>
            <person name="Zhang Z."/>
            <person name="Bailey J.A."/>
            <person name="Eichler E.E."/>
            <person name="Tuzun E."/>
            <person name="Birney E."/>
            <person name="Mongin E."/>
            <person name="Ureta-Vidal A."/>
            <person name="Woodwark C."/>
            <person name="Zdobnov E."/>
            <person name="Bork P."/>
            <person name="Suyama M."/>
            <person name="Torrents D."/>
            <person name="Alexandersson M."/>
            <person name="Trask B.J."/>
            <person name="Young J.M."/>
            <person name="Huang H."/>
            <person name="Wang H."/>
            <person name="Xing H."/>
            <person name="Daniels S."/>
            <person name="Gietzen D."/>
            <person name="Schmidt J."/>
            <person name="Stevens K."/>
            <person name="Vitt U."/>
            <person name="Wingrove J."/>
            <person name="Camara F."/>
            <person name="Mar Alba M."/>
            <person name="Abril J.F."/>
            <person name="Guigo R."/>
            <person name="Smit A."/>
            <person name="Dubchak I."/>
            <person name="Rubin E.M."/>
            <person name="Couronne O."/>
            <person name="Poliakov A."/>
            <person name="Huebner N."/>
            <person name="Ganten D."/>
            <person name="Goesele C."/>
            <person name="Hummel O."/>
            <person name="Kreitler T."/>
            <person name="Lee Y.-A."/>
            <person name="Monti J."/>
            <person name="Schulz H."/>
            <person name="Zimdahl H."/>
            <person name="Himmelbauer H."/>
            <person name="Lehrach H."/>
            <person name="Jacob H.J."/>
            <person name="Bromberg S."/>
            <person name="Gullings-Handley J."/>
            <person name="Jensen-Seaman M.I."/>
            <person name="Kwitek A.E."/>
            <person name="Lazar J."/>
            <person name="Pasko D."/>
            <person name="Tonellato P.J."/>
            <person name="Twigger S."/>
            <person name="Ponting C.P."/>
            <person name="Duarte J.M."/>
            <person name="Rice S."/>
            <person name="Goodstadt L."/>
            <person name="Beatson S.A."/>
            <person name="Emes R.D."/>
            <person name="Winter E.E."/>
            <person name="Webber C."/>
            <person name="Brandt P."/>
            <person name="Nyakatura G."/>
            <person name="Adetobi M."/>
            <person name="Chiaromonte F."/>
            <person name="Elnitski L."/>
            <person name="Eswara P."/>
            <person name="Hardison R.C."/>
            <person name="Hou M."/>
            <person name="Kolbe D."/>
            <person name="Makova K."/>
            <person name="Miller W."/>
            <person name="Nekrutenko A."/>
            <person name="Riemer C."/>
            <person name="Schwartz S."/>
            <person name="Taylor J."/>
            <person name="Yang S."/>
            <person name="Zhang Y."/>
            <person name="Lindpaintner K."/>
            <person name="Andrews T.D."/>
            <person name="Caccamo M."/>
            <person name="Clamp M."/>
            <person name="Clarke L."/>
            <person name="Curwen V."/>
            <person name="Durbin R.M."/>
            <person name="Eyras E."/>
            <person name="Searle S.M."/>
            <person name="Cooper G.M."/>
            <person name="Batzoglou S."/>
            <person name="Brudno M."/>
            <person name="Sidow A."/>
            <person name="Stone E.A."/>
            <person name="Payseur B.A."/>
            <person name="Bourque G."/>
            <person name="Lopez-Otin C."/>
            <person name="Puente X.S."/>
            <person name="Chakrabarti K."/>
            <person name="Chatterji S."/>
            <person name="Dewey C."/>
            <person name="Pachter L."/>
            <person name="Bray N."/>
            <person name="Yap V.B."/>
            <person name="Caspi A."/>
            <person name="Tesler G."/>
            <person name="Pevzner P.A."/>
            <person name="Haussler D."/>
            <person name="Roskin K.M."/>
            <person name="Baertsch R."/>
            <person name="Clawson H."/>
            <person name="Furey T.S."/>
            <person name="Hinrichs A.S."/>
            <person name="Karolchik D."/>
            <person name="Kent W.J."/>
            <person name="Rosenbloom K.R."/>
            <person name="Trumbower H."/>
            <person name="Weirauch M."/>
            <person name="Cooper D.N."/>
            <person name="Stenson P.D."/>
            <person name="Ma B."/>
            <person name="Brent M."/>
            <person name="Arumugam M."/>
            <person name="Shteynberg D."/>
            <person name="Copley R.R."/>
            <person name="Taylor M.S."/>
            <person name="Riethman H."/>
            <person name="Mudunuri U."/>
            <person name="Peterson J."/>
            <person name="Guyer M."/>
            <person name="Felsenfeld A."/>
            <person name="Old S."/>
            <person name="Mockrin S."/>
            <person name="Collins F.S."/>
        </authorList>
    </citation>
    <scope>NUCLEOTIDE SEQUENCE [LARGE SCALE GENOMIC DNA]</scope>
    <source>
        <strain>Brown Norway</strain>
    </source>
</reference>
<reference evidence="9" key="2">
    <citation type="journal article" date="2011" name="PLoS Biol.">
        <title>An OBSL1-Cul7Fbxw8 ubiquitin ligase signaling mechanism regulates Golgi morphology and dendrite patterning.</title>
        <authorList>
            <person name="Litterman N."/>
            <person name="Ikeuchi Y."/>
            <person name="Gallardo G."/>
            <person name="O'Connell B.C."/>
            <person name="Sowa M.E."/>
            <person name="Gygi S.P."/>
            <person name="Harper J.W."/>
            <person name="Bonni A."/>
        </authorList>
    </citation>
    <scope>FUNCTION</scope>
    <scope>INTERACTION WITH FBXW8 AND OBSL1</scope>
    <scope>SUBCELLULAR LOCATION</scope>
</reference>
<protein>
    <recommendedName>
        <fullName evidence="3">Cullin-7</fullName>
        <shortName evidence="3">CUL-7</shortName>
    </recommendedName>
</protein>
<proteinExistence type="evidence at protein level"/>
<dbReference type="EMBL" id="AABR06058791">
    <property type="status" value="NOT_ANNOTATED_CDS"/>
    <property type="molecule type" value="Genomic_DNA"/>
</dbReference>
<dbReference type="SMR" id="D3ZEF4"/>
<dbReference type="DIP" id="DIP-60186N"/>
<dbReference type="FunCoup" id="D3ZEF4">
    <property type="interactions" value="907"/>
</dbReference>
<dbReference type="IntAct" id="D3ZEF4">
    <property type="interactions" value="2"/>
</dbReference>
<dbReference type="STRING" id="10116.ENSRNOP00000024266"/>
<dbReference type="PhosphoSitePlus" id="D3ZEF4"/>
<dbReference type="jPOST" id="D3ZEF4"/>
<dbReference type="PaxDb" id="10116-ENSRNOP00000024266"/>
<dbReference type="PeptideAtlas" id="D3ZEF4"/>
<dbReference type="UCSC" id="RGD:1587048">
    <property type="organism name" value="rat"/>
</dbReference>
<dbReference type="AGR" id="RGD:1587048"/>
<dbReference type="RGD" id="1587048">
    <property type="gene designation" value="Cul7"/>
</dbReference>
<dbReference type="eggNOG" id="ENOG502RDJD">
    <property type="taxonomic scope" value="Eukaryota"/>
</dbReference>
<dbReference type="HOGENOM" id="CLU_001067_1_0_1"/>
<dbReference type="InParanoid" id="D3ZEF4"/>
<dbReference type="PhylomeDB" id="D3ZEF4"/>
<dbReference type="TreeFam" id="TF101154"/>
<dbReference type="Reactome" id="R-RNO-8951664">
    <property type="pathway name" value="Neddylation"/>
</dbReference>
<dbReference type="Reactome" id="R-RNO-983168">
    <property type="pathway name" value="Antigen processing: Ubiquitination &amp; Proteasome degradation"/>
</dbReference>
<dbReference type="UniPathway" id="UPA00143"/>
<dbReference type="PRO" id="PR:D3ZEF4"/>
<dbReference type="Proteomes" id="UP000002494">
    <property type="component" value="Unplaced"/>
</dbReference>
<dbReference type="GO" id="GO:1990393">
    <property type="term" value="C:3M complex"/>
    <property type="evidence" value="ECO:0000250"/>
    <property type="project" value="UniProtKB"/>
</dbReference>
<dbReference type="GO" id="GO:0005813">
    <property type="term" value="C:centrosome"/>
    <property type="evidence" value="ECO:0000250"/>
    <property type="project" value="UniProtKB"/>
</dbReference>
<dbReference type="GO" id="GO:0031467">
    <property type="term" value="C:Cul7-RING ubiquitin ligase complex"/>
    <property type="evidence" value="ECO:0000250"/>
    <property type="project" value="UniProtKB"/>
</dbReference>
<dbReference type="GO" id="GO:0005737">
    <property type="term" value="C:cytoplasm"/>
    <property type="evidence" value="ECO:0000250"/>
    <property type="project" value="UniProtKB"/>
</dbReference>
<dbReference type="GO" id="GO:0005794">
    <property type="term" value="C:Golgi apparatus"/>
    <property type="evidence" value="ECO:0000314"/>
    <property type="project" value="UniProtKB"/>
</dbReference>
<dbReference type="GO" id="GO:0048471">
    <property type="term" value="C:perinuclear region of cytoplasm"/>
    <property type="evidence" value="ECO:0000314"/>
    <property type="project" value="UniProtKB"/>
</dbReference>
<dbReference type="GO" id="GO:0160072">
    <property type="term" value="F:ubiquitin ligase complex scaffold activity"/>
    <property type="evidence" value="ECO:0000266"/>
    <property type="project" value="RGD"/>
</dbReference>
<dbReference type="GO" id="GO:0031625">
    <property type="term" value="F:ubiquitin protein ligase binding"/>
    <property type="evidence" value="ECO:0007669"/>
    <property type="project" value="InterPro"/>
</dbReference>
<dbReference type="GO" id="GO:0001837">
    <property type="term" value="P:epithelial to mesenchymal transition"/>
    <property type="evidence" value="ECO:0000250"/>
    <property type="project" value="UniProtKB"/>
</dbReference>
<dbReference type="GO" id="GO:0007030">
    <property type="term" value="P:Golgi organization"/>
    <property type="evidence" value="ECO:0000315"/>
    <property type="project" value="UniProtKB"/>
</dbReference>
<dbReference type="GO" id="GO:0000226">
    <property type="term" value="P:microtubule cytoskeleton organization"/>
    <property type="evidence" value="ECO:0000250"/>
    <property type="project" value="UniProtKB"/>
</dbReference>
<dbReference type="GO" id="GO:0000281">
    <property type="term" value="P:mitotic cytokinesis"/>
    <property type="evidence" value="ECO:0000250"/>
    <property type="project" value="UniProtKB"/>
</dbReference>
<dbReference type="GO" id="GO:0046627">
    <property type="term" value="P:negative regulation of insulin receptor signaling pathway"/>
    <property type="evidence" value="ECO:0000266"/>
    <property type="project" value="RGD"/>
</dbReference>
<dbReference type="GO" id="GO:0001890">
    <property type="term" value="P:placenta development"/>
    <property type="evidence" value="ECO:0000250"/>
    <property type="project" value="UniProtKB"/>
</dbReference>
<dbReference type="GO" id="GO:0050775">
    <property type="term" value="P:positive regulation of dendrite morphogenesis"/>
    <property type="evidence" value="ECO:0000315"/>
    <property type="project" value="UniProtKB"/>
</dbReference>
<dbReference type="GO" id="GO:0016567">
    <property type="term" value="P:protein ubiquitination"/>
    <property type="evidence" value="ECO:0000250"/>
    <property type="project" value="UniProtKB"/>
</dbReference>
<dbReference type="GO" id="GO:0007088">
    <property type="term" value="P:regulation of mitotic nuclear division"/>
    <property type="evidence" value="ECO:0000250"/>
    <property type="project" value="UniProtKB"/>
</dbReference>
<dbReference type="GO" id="GO:0006511">
    <property type="term" value="P:ubiquitin-dependent protein catabolic process"/>
    <property type="evidence" value="ECO:0000266"/>
    <property type="project" value="RGD"/>
</dbReference>
<dbReference type="GO" id="GO:0001570">
    <property type="term" value="P:vasculogenesis"/>
    <property type="evidence" value="ECO:0000266"/>
    <property type="project" value="RGD"/>
</dbReference>
<dbReference type="FunFam" id="1.10.10.10:FF:000207">
    <property type="entry name" value="Cullin 9"/>
    <property type="match status" value="1"/>
</dbReference>
<dbReference type="FunFam" id="2.60.120.260:FF:000046">
    <property type="entry name" value="Cullin 9"/>
    <property type="match status" value="1"/>
</dbReference>
<dbReference type="Gene3D" id="2.30.30.30">
    <property type="match status" value="1"/>
</dbReference>
<dbReference type="Gene3D" id="3.30.230.130">
    <property type="entry name" value="Cullin, Chain C, Domain 2"/>
    <property type="match status" value="1"/>
</dbReference>
<dbReference type="Gene3D" id="2.60.120.260">
    <property type="entry name" value="Galactose-binding domain-like"/>
    <property type="match status" value="1"/>
</dbReference>
<dbReference type="Gene3D" id="1.10.10.10">
    <property type="entry name" value="Winged helix-like DNA-binding domain superfamily/Winged helix DNA-binding domain"/>
    <property type="match status" value="1"/>
</dbReference>
<dbReference type="InterPro" id="IPR004939">
    <property type="entry name" value="APC_su10/DOC_dom"/>
</dbReference>
<dbReference type="InterPro" id="IPR016024">
    <property type="entry name" value="ARM-type_fold"/>
</dbReference>
<dbReference type="InterPro" id="IPR056405">
    <property type="entry name" value="ARM_CUL7_CUL9"/>
</dbReference>
<dbReference type="InterPro" id="IPR021097">
    <property type="entry name" value="CPH_domain"/>
</dbReference>
<dbReference type="InterPro" id="IPR055486">
    <property type="entry name" value="CUL7/CUL9_N"/>
</dbReference>
<dbReference type="InterPro" id="IPR045093">
    <property type="entry name" value="Cullin"/>
</dbReference>
<dbReference type="InterPro" id="IPR016158">
    <property type="entry name" value="Cullin_homology"/>
</dbReference>
<dbReference type="InterPro" id="IPR036317">
    <property type="entry name" value="Cullin_homology_sf"/>
</dbReference>
<dbReference type="InterPro" id="IPR001373">
    <property type="entry name" value="Cullin_N"/>
</dbReference>
<dbReference type="InterPro" id="IPR019559">
    <property type="entry name" value="Cullin_neddylation_domain"/>
</dbReference>
<dbReference type="InterPro" id="IPR008979">
    <property type="entry name" value="Galactose-bd-like_sf"/>
</dbReference>
<dbReference type="InterPro" id="IPR014722">
    <property type="entry name" value="Rib_uL2_dom2"/>
</dbReference>
<dbReference type="InterPro" id="IPR036388">
    <property type="entry name" value="WH-like_DNA-bd_sf"/>
</dbReference>
<dbReference type="PANTHER" id="PTHR22771">
    <property type="entry name" value="CULLIN AND GALACTOSE-BINDING DOMAIN-CONTAINING"/>
    <property type="match status" value="1"/>
</dbReference>
<dbReference type="PANTHER" id="PTHR22771:SF3">
    <property type="entry name" value="CULLIN-7"/>
    <property type="match status" value="1"/>
</dbReference>
<dbReference type="Pfam" id="PF03256">
    <property type="entry name" value="ANAPC10"/>
    <property type="match status" value="1"/>
</dbReference>
<dbReference type="Pfam" id="PF24742">
    <property type="entry name" value="ARM_CUL7_CUL9"/>
    <property type="match status" value="1"/>
</dbReference>
<dbReference type="Pfam" id="PF11515">
    <property type="entry name" value="Cul7"/>
    <property type="match status" value="1"/>
</dbReference>
<dbReference type="Pfam" id="PF23168">
    <property type="entry name" value="CUL7_CUL9_N"/>
    <property type="match status" value="1"/>
</dbReference>
<dbReference type="Pfam" id="PF00888">
    <property type="entry name" value="Cullin"/>
    <property type="match status" value="1"/>
</dbReference>
<dbReference type="SMART" id="SM01337">
    <property type="entry name" value="APC10"/>
    <property type="match status" value="1"/>
</dbReference>
<dbReference type="SMART" id="SM00884">
    <property type="entry name" value="Cullin_Nedd8"/>
    <property type="match status" value="1"/>
</dbReference>
<dbReference type="SUPFAM" id="SSF48371">
    <property type="entry name" value="ARM repeat"/>
    <property type="match status" value="1"/>
</dbReference>
<dbReference type="SUPFAM" id="SSF75632">
    <property type="entry name" value="Cullin homology domain"/>
    <property type="match status" value="1"/>
</dbReference>
<dbReference type="SUPFAM" id="SSF49785">
    <property type="entry name" value="Galactose-binding domain-like"/>
    <property type="match status" value="1"/>
</dbReference>
<dbReference type="SUPFAM" id="SSF63748">
    <property type="entry name" value="Tudor/PWWP/MBT"/>
    <property type="match status" value="1"/>
</dbReference>
<dbReference type="PROSITE" id="PS50069">
    <property type="entry name" value="CULLIN_2"/>
    <property type="match status" value="1"/>
</dbReference>
<dbReference type="PROSITE" id="PS51284">
    <property type="entry name" value="DOC"/>
    <property type="match status" value="1"/>
</dbReference>
<name>CUL7_RAT</name>
<sequence>MVGELRYREFRVPLGPGLHAYPDELIRQRVGHNGHPEYQIRWLILRRGDDGDSSQVDCKAEHILLWMTDDEIYANCHKMLGEDGQVIRPSQESAEAGALDKSVLGEMETDVKSLIQRALRQLEECVGAVPPAPLLHTVHVLSAYASIEPLTGVFKDRRVLDLVMHMLSSPDYQIRWSAGRMIQALSSHDAGTRTQILLSLSQQEAIEKHLDFDSRCALLALFAQATLTEHPMSFEGVQLPQVPGRLLFSLVKRYLCVTFLLDRLNGNAEDQDAQNNFIPEELNAGRGRVELEFSMAMGTLISELVQAMRWDWASSRSESSSPIFQPPPTEFFRPRAQRFRRSRRFRPRTAFASVNTYALYVRDTLRPGMRVRMLEDFEEISAGDEGQFRQSNDGMPPVQVLWDSTGHTYWVHWHMLEILGFEEDIEDVVDIDDQGAMVHGGLGVAPPFQHWKPIAQLFAEPYVVPEEEDREEREHLTQAEWWELFFFIKKLNAEERQHVVELLQEFLEGEHVLDFEILPELTVPVELAQDLMLSLPQQLDDSALRDLFNCYVYRKYGPEVLVGKRNRPFVLDDQLNLFRIETDSEAQDPPSQSASPALRQLVEGLGPSGKLLVDLERALSSEAPQENEVKPCLLQLQEEPQPFLTLMRSLDTPASNKALHLTALRILMQLVNFPEALLLPWHEAMDACMTCLRSPNTDREVLQELIFFLHRLTSTSRDYAVILNQLGARDAISKVLEKHRGKLELAQELRDMVFKCEKHAHLYRKLTTNILGGCIQMVLGQIEDHRRTHRPIQIPFFDVFLRYLCQGSSAEVKKNKYWEKVEVSSNPHRASRLTDRNAKTYWESNGTAGSHFITVHMRPGVLIRQLTLLVAGEDSSYMPAWVVVCGGDSISSVNTELNAVNVMPHASRVILLENLTRFWPIVQIRIKRCQQGGINTRIRGLEVLGPKPTFWPVFREQLCRHTRLFYMVRAQAWSQDIAEDRRSLLHLSSRLNGALRQEQNFADRFLPDEEAALALSKTCWEALVSPLVQNITSPDEDSTSSLGWLLNQYLECREAAYNPQSRAAAFSSRVRHLTHLLVHVEPCEAAPPVVAISQSKGRNRSHDWSSLTTRGLPSSIMRNLTRCWRSVVEEQVNKFLTSSWKDDDFVPRYCERYYILQKSSSELFGPRAAFLLAMRNGCADALLRLPFLRAAHVSEQFARHIDQRIQGSRMGGARGMEMLAQLQRCLESVLILSPLEIATTFEHYYQHYMADRLLSVGSSWLEGAVLEQIGPCFPGRLPQQMLQTLNISEELQRRFHVYQLQQLDQELLKLEDTEKKIQVAHEDSGKEHKSKKEDAAGETAAVAMADEEEEEGKKEEGEEEEGEGEEELEEEEERYYEGTMPEVCVLVLSPRFWPVASVCHMLNPTTCLPSYLRGTINHYSNFYSKSQSHSGLEKESPRQLQWTWQGRAEVQFGDQILHVSTVQMWLLLHLNHLKAVSVESLQALSELPPEVLNKAIGPLTSSRGPLDLQEQKNIPGGVLKIRDDSEEPRPRRGNVWLIPPQTYLKAEDEEGRNLEKRRNLLNCLVVRILKAHGDEGLHIDQLVHLVLEAWEKGPCPPRGLVSSLGRGAACRSSDVLSCILHLLGKGTLRRHDDRPQMLFYAVPITVMEPHTESLNPGSSGPNPPLTFHTLQIRSRGVPYASCTGTQTFSTFR</sequence>
<keyword id="KW-0963">Cytoplasm</keyword>
<keyword id="KW-0206">Cytoskeleton</keyword>
<keyword id="KW-0333">Golgi apparatus</keyword>
<keyword id="KW-1017">Isopeptide bond</keyword>
<keyword id="KW-1185">Reference proteome</keyword>
<keyword id="KW-0832">Ubl conjugation</keyword>
<keyword id="KW-0833">Ubl conjugation pathway</keyword>
<gene>
    <name type="primary">Cul7</name>
</gene>
<feature type="chain" id="PRO_0000422125" description="Cullin-7">
    <location>
        <begin position="1"/>
        <end position="1692"/>
    </location>
</feature>
<feature type="domain" description="CPH" evidence="4">
    <location>
        <begin position="348"/>
        <end position="421"/>
    </location>
</feature>
<feature type="domain" description="DOC" evidence="6">
    <location>
        <begin position="791"/>
        <end position="970"/>
    </location>
</feature>
<feature type="region of interest" description="Disordered" evidence="7">
    <location>
        <begin position="1319"/>
        <end position="1374"/>
    </location>
</feature>
<feature type="compositionally biased region" description="Basic and acidic residues" evidence="7">
    <location>
        <begin position="1319"/>
        <end position="1335"/>
    </location>
</feature>
<feature type="compositionally biased region" description="Acidic residues" evidence="7">
    <location>
        <begin position="1357"/>
        <end position="1374"/>
    </location>
</feature>
<feature type="cross-link" description="Glycyl lysine isopeptide (Lys-Gly) (interchain with G-Cter in NEDD8)" evidence="4">
    <location>
        <position position="1570"/>
    </location>
</feature>
<accession>D3ZEF4</accession>
<evidence type="ECO:0000250" key="1"/>
<evidence type="ECO:0000250" key="2">
    <source>
        <dbReference type="UniProtKB" id="Q14999"/>
    </source>
</evidence>
<evidence type="ECO:0000250" key="3">
    <source>
        <dbReference type="UniProtKB" id="Q8VE73"/>
    </source>
</evidence>
<evidence type="ECO:0000255" key="4"/>
<evidence type="ECO:0000255" key="5">
    <source>
        <dbReference type="PROSITE-ProRule" id="PRU00330"/>
    </source>
</evidence>
<evidence type="ECO:0000255" key="6">
    <source>
        <dbReference type="PROSITE-ProRule" id="PRU00614"/>
    </source>
</evidence>
<evidence type="ECO:0000256" key="7">
    <source>
        <dbReference type="SAM" id="MobiDB-lite"/>
    </source>
</evidence>
<evidence type="ECO:0000269" key="8">
    <source>
    </source>
</evidence>
<evidence type="ECO:0000305" key="9"/>